<sequence length="278" mass="31909">MSLALNPVAFNLGPFQVKWYGILMATGVLVATLMAINEGKKRHIMPDDFIDFLLWAVPIGFIGARIYYVVFEWGYFSQHPDQIIAIWNGGIAIYGGLIAGLIVLLIFCHQRMLPPFLMLDIIAPGVMAAQVIARWGNFMNQEAHGAKTTLSFLESLHLPHFIIQQMYINGSYYQPTYLYESTLNLIGLILILSLRHRKHLFKRGEIFLSYVIWYSAVRFFVEGMRTDSLYIANTIRVSQALSLILFFGAIILWIYRRKVVKPKWYLAGSGLKYPYNRD</sequence>
<dbReference type="EC" id="2.5.1.145" evidence="1"/>
<dbReference type="EMBL" id="AE017198">
    <property type="protein sequence ID" value="AAS08671.1"/>
    <property type="molecule type" value="Genomic_DNA"/>
</dbReference>
<dbReference type="RefSeq" id="WP_011161768.1">
    <property type="nucleotide sequence ID" value="NC_005362.1"/>
</dbReference>
<dbReference type="SMR" id="P60971"/>
<dbReference type="KEGG" id="ljo:LJ_0850"/>
<dbReference type="eggNOG" id="COG0682">
    <property type="taxonomic scope" value="Bacteria"/>
</dbReference>
<dbReference type="HOGENOM" id="CLU_013386_0_1_9"/>
<dbReference type="UniPathway" id="UPA00664"/>
<dbReference type="Proteomes" id="UP000000581">
    <property type="component" value="Chromosome"/>
</dbReference>
<dbReference type="GO" id="GO:0005886">
    <property type="term" value="C:plasma membrane"/>
    <property type="evidence" value="ECO:0007669"/>
    <property type="project" value="UniProtKB-SubCell"/>
</dbReference>
<dbReference type="GO" id="GO:0008961">
    <property type="term" value="F:phosphatidylglycerol-prolipoprotein diacylglyceryl transferase activity"/>
    <property type="evidence" value="ECO:0007669"/>
    <property type="project" value="UniProtKB-UniRule"/>
</dbReference>
<dbReference type="GO" id="GO:0042158">
    <property type="term" value="P:lipoprotein biosynthetic process"/>
    <property type="evidence" value="ECO:0007669"/>
    <property type="project" value="UniProtKB-UniRule"/>
</dbReference>
<dbReference type="HAMAP" id="MF_01147">
    <property type="entry name" value="Lgt"/>
    <property type="match status" value="1"/>
</dbReference>
<dbReference type="InterPro" id="IPR001640">
    <property type="entry name" value="Lgt"/>
</dbReference>
<dbReference type="NCBIfam" id="TIGR00544">
    <property type="entry name" value="lgt"/>
    <property type="match status" value="1"/>
</dbReference>
<dbReference type="PANTHER" id="PTHR30589:SF0">
    <property type="entry name" value="PHOSPHATIDYLGLYCEROL--PROLIPOPROTEIN DIACYLGLYCERYL TRANSFERASE"/>
    <property type="match status" value="1"/>
</dbReference>
<dbReference type="PANTHER" id="PTHR30589">
    <property type="entry name" value="PROLIPOPROTEIN DIACYLGLYCERYL TRANSFERASE"/>
    <property type="match status" value="1"/>
</dbReference>
<dbReference type="Pfam" id="PF01790">
    <property type="entry name" value="LGT"/>
    <property type="match status" value="1"/>
</dbReference>
<evidence type="ECO:0000255" key="1">
    <source>
        <dbReference type="HAMAP-Rule" id="MF_01147"/>
    </source>
</evidence>
<feature type="chain" id="PRO_0000172617" description="Phosphatidylglycerol--prolipoprotein diacylglyceryl transferase">
    <location>
        <begin position="1"/>
        <end position="278"/>
    </location>
</feature>
<feature type="transmembrane region" description="Helical" evidence="1">
    <location>
        <begin position="19"/>
        <end position="39"/>
    </location>
</feature>
<feature type="transmembrane region" description="Helical" evidence="1">
    <location>
        <begin position="49"/>
        <end position="69"/>
    </location>
</feature>
<feature type="transmembrane region" description="Helical" evidence="1">
    <location>
        <begin position="86"/>
        <end position="106"/>
    </location>
</feature>
<feature type="transmembrane region" description="Helical" evidence="1">
    <location>
        <begin position="112"/>
        <end position="132"/>
    </location>
</feature>
<feature type="transmembrane region" description="Helical" evidence="1">
    <location>
        <begin position="174"/>
        <end position="194"/>
    </location>
</feature>
<feature type="transmembrane region" description="Helical" evidence="1">
    <location>
        <begin position="204"/>
        <end position="224"/>
    </location>
</feature>
<feature type="transmembrane region" description="Helical" evidence="1">
    <location>
        <begin position="235"/>
        <end position="255"/>
    </location>
</feature>
<feature type="binding site" evidence="1">
    <location>
        <position position="134"/>
    </location>
    <ligand>
        <name>a 1,2-diacyl-sn-glycero-3-phospho-(1'-sn-glycerol)</name>
        <dbReference type="ChEBI" id="CHEBI:64716"/>
    </ligand>
</feature>
<proteinExistence type="inferred from homology"/>
<comment type="function">
    <text evidence="1">Catalyzes the transfer of the diacylglyceryl group from phosphatidylglycerol to the sulfhydryl group of the N-terminal cysteine of a prolipoprotein, the first step in the formation of mature lipoproteins.</text>
</comment>
<comment type="catalytic activity">
    <reaction evidence="1">
        <text>L-cysteinyl-[prolipoprotein] + a 1,2-diacyl-sn-glycero-3-phospho-(1'-sn-glycerol) = an S-1,2-diacyl-sn-glyceryl-L-cysteinyl-[prolipoprotein] + sn-glycerol 1-phosphate + H(+)</text>
        <dbReference type="Rhea" id="RHEA:56712"/>
        <dbReference type="Rhea" id="RHEA-COMP:14679"/>
        <dbReference type="Rhea" id="RHEA-COMP:14680"/>
        <dbReference type="ChEBI" id="CHEBI:15378"/>
        <dbReference type="ChEBI" id="CHEBI:29950"/>
        <dbReference type="ChEBI" id="CHEBI:57685"/>
        <dbReference type="ChEBI" id="CHEBI:64716"/>
        <dbReference type="ChEBI" id="CHEBI:140658"/>
        <dbReference type="EC" id="2.5.1.145"/>
    </reaction>
</comment>
<comment type="pathway">
    <text evidence="1">Protein modification; lipoprotein biosynthesis (diacylglyceryl transfer).</text>
</comment>
<comment type="subcellular location">
    <subcellularLocation>
        <location evidence="1">Cell membrane</location>
        <topology evidence="1">Multi-pass membrane protein</topology>
    </subcellularLocation>
</comment>
<comment type="similarity">
    <text evidence="1">Belongs to the Lgt family.</text>
</comment>
<keyword id="KW-1003">Cell membrane</keyword>
<keyword id="KW-0472">Membrane</keyword>
<keyword id="KW-0808">Transferase</keyword>
<keyword id="KW-0812">Transmembrane</keyword>
<keyword id="KW-1133">Transmembrane helix</keyword>
<protein>
    <recommendedName>
        <fullName evidence="1">Phosphatidylglycerol--prolipoprotein diacylglyceryl transferase</fullName>
        <ecNumber evidence="1">2.5.1.145</ecNumber>
    </recommendedName>
</protein>
<name>LGT_LACJO</name>
<organism>
    <name type="scientific">Lactobacillus johnsonii (strain CNCM I-12250 / La1 / NCC 533)</name>
    <dbReference type="NCBI Taxonomy" id="257314"/>
    <lineage>
        <taxon>Bacteria</taxon>
        <taxon>Bacillati</taxon>
        <taxon>Bacillota</taxon>
        <taxon>Bacilli</taxon>
        <taxon>Lactobacillales</taxon>
        <taxon>Lactobacillaceae</taxon>
        <taxon>Lactobacillus</taxon>
    </lineage>
</organism>
<reference key="1">
    <citation type="journal article" date="2004" name="Proc. Natl. Acad. Sci. U.S.A.">
        <title>The genome sequence of the probiotic intestinal bacterium Lactobacillus johnsonii NCC 533.</title>
        <authorList>
            <person name="Pridmore R.D."/>
            <person name="Berger B."/>
            <person name="Desiere F."/>
            <person name="Vilanova D."/>
            <person name="Barretto C."/>
            <person name="Pittet A.-C."/>
            <person name="Zwahlen M.-C."/>
            <person name="Rouvet M."/>
            <person name="Altermann E."/>
            <person name="Barrangou R."/>
            <person name="Mollet B."/>
            <person name="Mercenier A."/>
            <person name="Klaenhammer T."/>
            <person name="Arigoni F."/>
            <person name="Schell M.A."/>
        </authorList>
    </citation>
    <scope>NUCLEOTIDE SEQUENCE [LARGE SCALE GENOMIC DNA]</scope>
    <source>
        <strain>CNCM I-1225 / La1 / NCC 533</strain>
    </source>
</reference>
<accession>P60971</accession>
<gene>
    <name evidence="1" type="primary">lgt</name>
    <name type="ordered locus">LJ_0850</name>
</gene>